<sequence length="486" mass="53015">MSSSSASQPSHDQLATKAQAWSALFSEPMSDLVKRYTSSVFFDKRLWQADIAGSLAHAEMLAAQGIISAQDHADIQKGMAQITQEIASGAFEWKLDLEDVHLNIEARLTQLVGDAGKRLHTGRSRNDQVATDVRLWLRGEIDLIEGLLSELQLSLVEVAEQNVEVILPGFTHLQVAQPVSFAHHLLAYVEMFARDAERMRDVRRRVNVLPLGSAALAGTTYPLDRERVAKTLGMEGVCQNSLDGVSDRDFAIEFTAAASLCMVHVSRLSEELIIWMSQNFGFIKIADRFTTGSSIMPQKKNPDVPELARGKTGRVVGHLMGLITLMKGQPLAYNKDNQEDKEPLFDTVDTLKDTLRIFAEMIGGQMNPATGCKDGGITVNAEAMRAAALKGYATATDLADYLVKKGLPFRDAHETVAHAVKAAVSHSVDLSELPLAVLQGFHPAIEKDVFDALSLQGSLNARNTLGGTAPAQVRTQLARHRARLSA</sequence>
<keyword id="KW-0028">Amino-acid biosynthesis</keyword>
<keyword id="KW-0055">Arginine biosynthesis</keyword>
<keyword id="KW-0963">Cytoplasm</keyword>
<keyword id="KW-0456">Lyase</keyword>
<keyword id="KW-1185">Reference proteome</keyword>
<comment type="catalytic activity">
    <reaction evidence="1">
        <text>2-(N(omega)-L-arginino)succinate = fumarate + L-arginine</text>
        <dbReference type="Rhea" id="RHEA:24020"/>
        <dbReference type="ChEBI" id="CHEBI:29806"/>
        <dbReference type="ChEBI" id="CHEBI:32682"/>
        <dbReference type="ChEBI" id="CHEBI:57472"/>
        <dbReference type="EC" id="4.3.2.1"/>
    </reaction>
</comment>
<comment type="pathway">
    <text evidence="1">Amino-acid biosynthesis; L-arginine biosynthesis; L-arginine from L-ornithine and carbamoyl phosphate: step 3/3.</text>
</comment>
<comment type="subcellular location">
    <subcellularLocation>
        <location evidence="1">Cytoplasm</location>
    </subcellularLocation>
</comment>
<comment type="similarity">
    <text evidence="1">Belongs to the lyase 1 family. Argininosuccinate lyase subfamily.</text>
</comment>
<organism>
    <name type="scientific">Acidovorax ebreus (strain TPSY)</name>
    <name type="common">Diaphorobacter sp. (strain TPSY)</name>
    <dbReference type="NCBI Taxonomy" id="535289"/>
    <lineage>
        <taxon>Bacteria</taxon>
        <taxon>Pseudomonadati</taxon>
        <taxon>Pseudomonadota</taxon>
        <taxon>Betaproteobacteria</taxon>
        <taxon>Burkholderiales</taxon>
        <taxon>Comamonadaceae</taxon>
        <taxon>Diaphorobacter</taxon>
    </lineage>
</organism>
<dbReference type="EC" id="4.3.2.1" evidence="1"/>
<dbReference type="EMBL" id="CP001392">
    <property type="protein sequence ID" value="ACM34099.1"/>
    <property type="molecule type" value="Genomic_DNA"/>
</dbReference>
<dbReference type="RefSeq" id="WP_011806431.1">
    <property type="nucleotide sequence ID" value="NC_011992.1"/>
</dbReference>
<dbReference type="SMR" id="B9MDU0"/>
<dbReference type="GeneID" id="84680580"/>
<dbReference type="KEGG" id="dia:Dtpsy_2664"/>
<dbReference type="eggNOG" id="COG0165">
    <property type="taxonomic scope" value="Bacteria"/>
</dbReference>
<dbReference type="HOGENOM" id="CLU_027272_2_3_4"/>
<dbReference type="UniPathway" id="UPA00068">
    <property type="reaction ID" value="UER00114"/>
</dbReference>
<dbReference type="Proteomes" id="UP000000450">
    <property type="component" value="Chromosome"/>
</dbReference>
<dbReference type="GO" id="GO:0005829">
    <property type="term" value="C:cytosol"/>
    <property type="evidence" value="ECO:0007669"/>
    <property type="project" value="TreeGrafter"/>
</dbReference>
<dbReference type="GO" id="GO:0004056">
    <property type="term" value="F:argininosuccinate lyase activity"/>
    <property type="evidence" value="ECO:0007669"/>
    <property type="project" value="UniProtKB-UniRule"/>
</dbReference>
<dbReference type="GO" id="GO:0042450">
    <property type="term" value="P:arginine biosynthetic process via ornithine"/>
    <property type="evidence" value="ECO:0007669"/>
    <property type="project" value="InterPro"/>
</dbReference>
<dbReference type="GO" id="GO:0006526">
    <property type="term" value="P:L-arginine biosynthetic process"/>
    <property type="evidence" value="ECO:0007669"/>
    <property type="project" value="UniProtKB-UniRule"/>
</dbReference>
<dbReference type="CDD" id="cd01359">
    <property type="entry name" value="Argininosuccinate_lyase"/>
    <property type="match status" value="1"/>
</dbReference>
<dbReference type="FunFam" id="1.10.275.10:FF:000002">
    <property type="entry name" value="Argininosuccinate lyase"/>
    <property type="match status" value="1"/>
</dbReference>
<dbReference type="FunFam" id="1.10.40.30:FF:000001">
    <property type="entry name" value="Argininosuccinate lyase"/>
    <property type="match status" value="1"/>
</dbReference>
<dbReference type="FunFam" id="1.20.200.10:FF:000015">
    <property type="entry name" value="argininosuccinate lyase isoform X2"/>
    <property type="match status" value="1"/>
</dbReference>
<dbReference type="Gene3D" id="1.10.40.30">
    <property type="entry name" value="Fumarase/aspartase (C-terminal domain)"/>
    <property type="match status" value="1"/>
</dbReference>
<dbReference type="Gene3D" id="1.20.200.10">
    <property type="entry name" value="Fumarase/aspartase (Central domain)"/>
    <property type="match status" value="1"/>
</dbReference>
<dbReference type="Gene3D" id="1.10.275.10">
    <property type="entry name" value="Fumarase/aspartase (N-terminal domain)"/>
    <property type="match status" value="1"/>
</dbReference>
<dbReference type="HAMAP" id="MF_00006">
    <property type="entry name" value="Arg_succ_lyase"/>
    <property type="match status" value="1"/>
</dbReference>
<dbReference type="InterPro" id="IPR029419">
    <property type="entry name" value="Arg_succ_lyase_C"/>
</dbReference>
<dbReference type="InterPro" id="IPR009049">
    <property type="entry name" value="Argininosuccinate_lyase"/>
</dbReference>
<dbReference type="InterPro" id="IPR024083">
    <property type="entry name" value="Fumarase/histidase_N"/>
</dbReference>
<dbReference type="InterPro" id="IPR020557">
    <property type="entry name" value="Fumarate_lyase_CS"/>
</dbReference>
<dbReference type="InterPro" id="IPR000362">
    <property type="entry name" value="Fumarate_lyase_fam"/>
</dbReference>
<dbReference type="InterPro" id="IPR022761">
    <property type="entry name" value="Fumarate_lyase_N"/>
</dbReference>
<dbReference type="InterPro" id="IPR008948">
    <property type="entry name" value="L-Aspartase-like"/>
</dbReference>
<dbReference type="NCBIfam" id="TIGR00838">
    <property type="entry name" value="argH"/>
    <property type="match status" value="1"/>
</dbReference>
<dbReference type="PANTHER" id="PTHR43814">
    <property type="entry name" value="ARGININOSUCCINATE LYASE"/>
    <property type="match status" value="1"/>
</dbReference>
<dbReference type="PANTHER" id="PTHR43814:SF1">
    <property type="entry name" value="ARGININOSUCCINATE LYASE"/>
    <property type="match status" value="1"/>
</dbReference>
<dbReference type="Pfam" id="PF14698">
    <property type="entry name" value="ASL_C2"/>
    <property type="match status" value="1"/>
</dbReference>
<dbReference type="Pfam" id="PF00206">
    <property type="entry name" value="Lyase_1"/>
    <property type="match status" value="1"/>
</dbReference>
<dbReference type="PRINTS" id="PR00145">
    <property type="entry name" value="ARGSUCLYASE"/>
</dbReference>
<dbReference type="PRINTS" id="PR00149">
    <property type="entry name" value="FUMRATELYASE"/>
</dbReference>
<dbReference type="SUPFAM" id="SSF48557">
    <property type="entry name" value="L-aspartase-like"/>
    <property type="match status" value="1"/>
</dbReference>
<dbReference type="PROSITE" id="PS00163">
    <property type="entry name" value="FUMARATE_LYASES"/>
    <property type="match status" value="1"/>
</dbReference>
<protein>
    <recommendedName>
        <fullName evidence="1">Argininosuccinate lyase</fullName>
        <shortName evidence="1">ASAL</shortName>
        <ecNumber evidence="1">4.3.2.1</ecNumber>
    </recommendedName>
    <alternativeName>
        <fullName evidence="1">Arginosuccinase</fullName>
    </alternativeName>
</protein>
<name>ARLY_ACIET</name>
<gene>
    <name evidence="1" type="primary">argH</name>
    <name type="ordered locus">Dtpsy_2664</name>
</gene>
<accession>B9MDU0</accession>
<feature type="chain" id="PRO_1000116320" description="Argininosuccinate lyase">
    <location>
        <begin position="1"/>
        <end position="486"/>
    </location>
</feature>
<proteinExistence type="inferred from homology"/>
<reference key="1">
    <citation type="submission" date="2009-01" db="EMBL/GenBank/DDBJ databases">
        <title>Complete sequence of Diaphorobacter sp. TPSY.</title>
        <authorList>
            <consortium name="US DOE Joint Genome Institute"/>
            <person name="Lucas S."/>
            <person name="Copeland A."/>
            <person name="Lapidus A."/>
            <person name="Glavina del Rio T."/>
            <person name="Tice H."/>
            <person name="Bruce D."/>
            <person name="Goodwin L."/>
            <person name="Pitluck S."/>
            <person name="Chertkov O."/>
            <person name="Brettin T."/>
            <person name="Detter J.C."/>
            <person name="Han C."/>
            <person name="Larimer F."/>
            <person name="Land M."/>
            <person name="Hauser L."/>
            <person name="Kyrpides N."/>
            <person name="Mikhailova N."/>
            <person name="Coates J.D."/>
        </authorList>
    </citation>
    <scope>NUCLEOTIDE SEQUENCE [LARGE SCALE GENOMIC DNA]</scope>
    <source>
        <strain>TPSY</strain>
    </source>
</reference>
<evidence type="ECO:0000255" key="1">
    <source>
        <dbReference type="HAMAP-Rule" id="MF_00006"/>
    </source>
</evidence>